<proteinExistence type="inferred from homology"/>
<organism>
    <name type="scientific">Burkholderia multivorans (strain ATCC 17616 / 249)</name>
    <dbReference type="NCBI Taxonomy" id="395019"/>
    <lineage>
        <taxon>Bacteria</taxon>
        <taxon>Pseudomonadati</taxon>
        <taxon>Pseudomonadota</taxon>
        <taxon>Betaproteobacteria</taxon>
        <taxon>Burkholderiales</taxon>
        <taxon>Burkholderiaceae</taxon>
        <taxon>Burkholderia</taxon>
        <taxon>Burkholderia cepacia complex</taxon>
    </lineage>
</organism>
<keyword id="KW-0028">Amino-acid biosynthesis</keyword>
<keyword id="KW-0100">Branched-chain amino acid biosynthesis</keyword>
<keyword id="KW-0963">Cytoplasm</keyword>
<keyword id="KW-0432">Leucine biosynthesis</keyword>
<keyword id="KW-0460">Magnesium</keyword>
<keyword id="KW-0464">Manganese</keyword>
<keyword id="KW-0479">Metal-binding</keyword>
<keyword id="KW-0520">NAD</keyword>
<keyword id="KW-0560">Oxidoreductase</keyword>
<keyword id="KW-1185">Reference proteome</keyword>
<comment type="function">
    <text evidence="1">Catalyzes the oxidation of 3-carboxy-2-hydroxy-4-methylpentanoate (3-isopropylmalate) to 3-carboxy-4-methyl-2-oxopentanoate. The product decarboxylates to 4-methyl-2 oxopentanoate.</text>
</comment>
<comment type="catalytic activity">
    <reaction evidence="1">
        <text>(2R,3S)-3-isopropylmalate + NAD(+) = 4-methyl-2-oxopentanoate + CO2 + NADH</text>
        <dbReference type="Rhea" id="RHEA:32271"/>
        <dbReference type="ChEBI" id="CHEBI:16526"/>
        <dbReference type="ChEBI" id="CHEBI:17865"/>
        <dbReference type="ChEBI" id="CHEBI:35121"/>
        <dbReference type="ChEBI" id="CHEBI:57540"/>
        <dbReference type="ChEBI" id="CHEBI:57945"/>
        <dbReference type="EC" id="1.1.1.85"/>
    </reaction>
</comment>
<comment type="cofactor">
    <cofactor evidence="1">
        <name>Mg(2+)</name>
        <dbReference type="ChEBI" id="CHEBI:18420"/>
    </cofactor>
    <cofactor evidence="1">
        <name>Mn(2+)</name>
        <dbReference type="ChEBI" id="CHEBI:29035"/>
    </cofactor>
    <text evidence="1">Binds 1 Mg(2+) or Mn(2+) ion per subunit.</text>
</comment>
<comment type="pathway">
    <text evidence="1">Amino-acid biosynthesis; L-leucine biosynthesis; L-leucine from 3-methyl-2-oxobutanoate: step 3/4.</text>
</comment>
<comment type="subunit">
    <text evidence="1">Homodimer.</text>
</comment>
<comment type="subcellular location">
    <subcellularLocation>
        <location evidence="1">Cytoplasm</location>
    </subcellularLocation>
</comment>
<comment type="similarity">
    <text evidence="1">Belongs to the isocitrate and isopropylmalate dehydrogenases family. LeuB type 1 subfamily.</text>
</comment>
<sequence>MKIAVLPGDGIGPEIVTEAVKVLNALDEKFELEQAPVGGAGYEARGHPLPDATLKLAKEADAILFGAVGDWKYDSLERALRPEQAILGLRKHLELFANFRPAICYPQLVDASPLKPELVAGLDILIVRELNGDIYFGQPRGVRAAPDGPFAGEREGFDTMRYSEPEVRRIAHVAFQAAQKRAKKLLSVDKSNVLETSQFWRDIMIDVSKEYADVELSHMYVDNAAMQLAKAPKQFDVIVTGNMFGDILSDEASMLTGSIGMLPSASLDKNNKGLYEPSHGSAPDIAGKGIANPLATILSAAMLLRYSLNRAEQADRIERAVKTVLEQGYRTGDIATPGCKQVGTAAMGDAVVAAL</sequence>
<accession>Q845W3</accession>
<accession>A9AMB2</accession>
<evidence type="ECO:0000255" key="1">
    <source>
        <dbReference type="HAMAP-Rule" id="MF_01033"/>
    </source>
</evidence>
<gene>
    <name evidence="1" type="primary">leuB</name>
    <name type="ordered locus">Bmul_4627</name>
    <name type="ordered locus">BMULJ_03884</name>
</gene>
<protein>
    <recommendedName>
        <fullName evidence="1">3-isopropylmalate dehydrogenase</fullName>
        <ecNumber evidence="1">1.1.1.85</ecNumber>
    </recommendedName>
    <alternativeName>
        <fullName evidence="1">3-IPM-DH</fullName>
    </alternativeName>
    <alternativeName>
        <fullName evidence="1">Beta-IPM dehydrogenase</fullName>
        <shortName evidence="1">IMDH</shortName>
    </alternativeName>
</protein>
<feature type="chain" id="PRO_0000083673" description="3-isopropylmalate dehydrogenase">
    <location>
        <begin position="1"/>
        <end position="355"/>
    </location>
</feature>
<feature type="binding site" evidence="1">
    <location>
        <position position="90"/>
    </location>
    <ligand>
        <name>substrate</name>
    </ligand>
</feature>
<feature type="binding site" evidence="1">
    <location>
        <position position="100"/>
    </location>
    <ligand>
        <name>substrate</name>
    </ligand>
</feature>
<feature type="binding site" evidence="1">
    <location>
        <position position="128"/>
    </location>
    <ligand>
        <name>substrate</name>
    </ligand>
</feature>
<feature type="binding site" evidence="1">
    <location>
        <position position="222"/>
    </location>
    <ligand>
        <name>Mg(2+)</name>
        <dbReference type="ChEBI" id="CHEBI:18420"/>
    </ligand>
</feature>
<feature type="binding site" evidence="1">
    <location>
        <position position="222"/>
    </location>
    <ligand>
        <name>substrate</name>
    </ligand>
</feature>
<feature type="binding site" evidence="1">
    <location>
        <position position="246"/>
    </location>
    <ligand>
        <name>Mg(2+)</name>
        <dbReference type="ChEBI" id="CHEBI:18420"/>
    </ligand>
</feature>
<feature type="binding site" evidence="1">
    <location>
        <position position="250"/>
    </location>
    <ligand>
        <name>Mg(2+)</name>
        <dbReference type="ChEBI" id="CHEBI:18420"/>
    </ligand>
</feature>
<feature type="binding site" evidence="1">
    <location>
        <begin position="280"/>
        <end position="292"/>
    </location>
    <ligand>
        <name>NAD(+)</name>
        <dbReference type="ChEBI" id="CHEBI:57540"/>
    </ligand>
</feature>
<feature type="site" description="Important for catalysis" evidence="1">
    <location>
        <position position="135"/>
    </location>
</feature>
<feature type="site" description="Important for catalysis" evidence="1">
    <location>
        <position position="190"/>
    </location>
</feature>
<dbReference type="EC" id="1.1.1.85" evidence="1"/>
<dbReference type="EMBL" id="AB091435">
    <property type="protein sequence ID" value="BAC65259.1"/>
    <property type="molecule type" value="Genomic_DNA"/>
</dbReference>
<dbReference type="EMBL" id="CP000869">
    <property type="protein sequence ID" value="ABX18305.1"/>
    <property type="molecule type" value="Genomic_DNA"/>
</dbReference>
<dbReference type="EMBL" id="AP009386">
    <property type="protein sequence ID" value="BAG45744.1"/>
    <property type="molecule type" value="Genomic_DNA"/>
</dbReference>
<dbReference type="RefSeq" id="WP_012217300.1">
    <property type="nucleotide sequence ID" value="NC_010086.1"/>
</dbReference>
<dbReference type="SMR" id="Q845W3"/>
<dbReference type="STRING" id="395019.BMULJ_03884"/>
<dbReference type="KEGG" id="bmj:BMULJ_03884"/>
<dbReference type="KEGG" id="bmu:Bmul_4627"/>
<dbReference type="eggNOG" id="COG0473">
    <property type="taxonomic scope" value="Bacteria"/>
</dbReference>
<dbReference type="HOGENOM" id="CLU_031953_0_3_4"/>
<dbReference type="UniPathway" id="UPA00048">
    <property type="reaction ID" value="UER00072"/>
</dbReference>
<dbReference type="Proteomes" id="UP000008815">
    <property type="component" value="Chromosome 2"/>
</dbReference>
<dbReference type="GO" id="GO:0005829">
    <property type="term" value="C:cytosol"/>
    <property type="evidence" value="ECO:0007669"/>
    <property type="project" value="TreeGrafter"/>
</dbReference>
<dbReference type="GO" id="GO:0003862">
    <property type="term" value="F:3-isopropylmalate dehydrogenase activity"/>
    <property type="evidence" value="ECO:0007669"/>
    <property type="project" value="UniProtKB-UniRule"/>
</dbReference>
<dbReference type="GO" id="GO:0000287">
    <property type="term" value="F:magnesium ion binding"/>
    <property type="evidence" value="ECO:0007669"/>
    <property type="project" value="InterPro"/>
</dbReference>
<dbReference type="GO" id="GO:0051287">
    <property type="term" value="F:NAD binding"/>
    <property type="evidence" value="ECO:0007669"/>
    <property type="project" value="InterPro"/>
</dbReference>
<dbReference type="GO" id="GO:0009098">
    <property type="term" value="P:L-leucine biosynthetic process"/>
    <property type="evidence" value="ECO:0007669"/>
    <property type="project" value="UniProtKB-UniRule"/>
</dbReference>
<dbReference type="FunFam" id="3.40.718.10:FF:000028">
    <property type="entry name" value="3-isopropylmalate dehydrogenase"/>
    <property type="match status" value="1"/>
</dbReference>
<dbReference type="Gene3D" id="3.40.718.10">
    <property type="entry name" value="Isopropylmalate Dehydrogenase"/>
    <property type="match status" value="1"/>
</dbReference>
<dbReference type="HAMAP" id="MF_01033">
    <property type="entry name" value="LeuB_type1"/>
    <property type="match status" value="1"/>
</dbReference>
<dbReference type="InterPro" id="IPR019818">
    <property type="entry name" value="IsoCit/isopropylmalate_DH_CS"/>
</dbReference>
<dbReference type="InterPro" id="IPR024084">
    <property type="entry name" value="IsoPropMal-DH-like_dom"/>
</dbReference>
<dbReference type="InterPro" id="IPR004429">
    <property type="entry name" value="Isopropylmalate_DH"/>
</dbReference>
<dbReference type="NCBIfam" id="TIGR00169">
    <property type="entry name" value="leuB"/>
    <property type="match status" value="1"/>
</dbReference>
<dbReference type="PANTHER" id="PTHR42979">
    <property type="entry name" value="3-ISOPROPYLMALATE DEHYDROGENASE"/>
    <property type="match status" value="1"/>
</dbReference>
<dbReference type="PANTHER" id="PTHR42979:SF1">
    <property type="entry name" value="3-ISOPROPYLMALATE DEHYDROGENASE"/>
    <property type="match status" value="1"/>
</dbReference>
<dbReference type="Pfam" id="PF00180">
    <property type="entry name" value="Iso_dh"/>
    <property type="match status" value="1"/>
</dbReference>
<dbReference type="SMART" id="SM01329">
    <property type="entry name" value="Iso_dh"/>
    <property type="match status" value="1"/>
</dbReference>
<dbReference type="SUPFAM" id="SSF53659">
    <property type="entry name" value="Isocitrate/Isopropylmalate dehydrogenase-like"/>
    <property type="match status" value="1"/>
</dbReference>
<dbReference type="PROSITE" id="PS00470">
    <property type="entry name" value="IDH_IMDH"/>
    <property type="match status" value="1"/>
</dbReference>
<name>LEU3_BURM1</name>
<reference key="1">
    <citation type="journal article" date="2003" name="J. Bacteriol.">
        <title>Distribution and organization of auxotrophic genes on the multichromosomal genome of Burkholderia multivorans ATCC 17616.</title>
        <authorList>
            <person name="Komatsu H."/>
            <person name="Imura Y."/>
            <person name="Ohori A."/>
            <person name="Nagata Y."/>
            <person name="Tsuda M."/>
        </authorList>
    </citation>
    <scope>NUCLEOTIDE SEQUENCE [GENOMIC DNA]</scope>
</reference>
<reference key="2">
    <citation type="submission" date="2007-10" db="EMBL/GenBank/DDBJ databases">
        <title>Complete sequence of chromosome 2 of Burkholderia multivorans ATCC 17616.</title>
        <authorList>
            <person name="Copeland A."/>
            <person name="Lucas S."/>
            <person name="Lapidus A."/>
            <person name="Barry K."/>
            <person name="Glavina del Rio T."/>
            <person name="Dalin E."/>
            <person name="Tice H."/>
            <person name="Pitluck S."/>
            <person name="Chain P."/>
            <person name="Malfatti S."/>
            <person name="Shin M."/>
            <person name="Vergez L."/>
            <person name="Schmutz J."/>
            <person name="Larimer F."/>
            <person name="Land M."/>
            <person name="Hauser L."/>
            <person name="Kyrpides N."/>
            <person name="Kim E."/>
            <person name="Tiedje J."/>
            <person name="Richardson P."/>
        </authorList>
    </citation>
    <scope>NUCLEOTIDE SEQUENCE [LARGE SCALE GENOMIC DNA]</scope>
    <source>
        <strain>ATCC 17616 / 249</strain>
    </source>
</reference>
<reference key="3">
    <citation type="submission" date="2007-04" db="EMBL/GenBank/DDBJ databases">
        <title>Complete genome sequence of Burkholderia multivorans ATCC 17616.</title>
        <authorList>
            <person name="Ohtsubo Y."/>
            <person name="Yamashita A."/>
            <person name="Kurokawa K."/>
            <person name="Takami H."/>
            <person name="Yuhara S."/>
            <person name="Nishiyama E."/>
            <person name="Endo R."/>
            <person name="Miyazaki R."/>
            <person name="Ono A."/>
            <person name="Yano K."/>
            <person name="Ito M."/>
            <person name="Sota M."/>
            <person name="Yuji N."/>
            <person name="Hattori M."/>
            <person name="Tsuda M."/>
        </authorList>
    </citation>
    <scope>NUCLEOTIDE SEQUENCE [LARGE SCALE GENOMIC DNA]</scope>
    <source>
        <strain>ATCC 17616 / 249</strain>
    </source>
</reference>